<sequence length="257" mass="28734">MALSCSKVLSFYLSPVVGGGDVPKKLTFSSFLGLSKGVGGSRSSRVCAASNAPAPLAGVIFEPFQELKKDYLAVPIAHNVXLARQNYADDSESAINEQINVEYNVSYVYHALFAYFDRDNIALKGLAKFFKESSEEEREHAEQLIKYQNIRGGRVVLHPITSPPSEFEHSEKGDALYAMELALSLEKLTNEKLLHVHSVAERNNDPQXADFIESEFLYEQVKSIKKIAEYVAQLRLVGKGHGVWHFDQKLLHDEDHV</sequence>
<organism>
    <name type="scientific">Glycine max</name>
    <name type="common">Soybean</name>
    <name type="synonym">Glycine hispida</name>
    <dbReference type="NCBI Taxonomy" id="3847"/>
    <lineage>
        <taxon>Eukaryota</taxon>
        <taxon>Viridiplantae</taxon>
        <taxon>Streptophyta</taxon>
        <taxon>Embryophyta</taxon>
        <taxon>Tracheophyta</taxon>
        <taxon>Spermatophyta</taxon>
        <taxon>Magnoliopsida</taxon>
        <taxon>eudicotyledons</taxon>
        <taxon>Gunneridae</taxon>
        <taxon>Pentapetalae</taxon>
        <taxon>rosids</taxon>
        <taxon>fabids</taxon>
        <taxon>Fabales</taxon>
        <taxon>Fabaceae</taxon>
        <taxon>Papilionoideae</taxon>
        <taxon>50 kb inversion clade</taxon>
        <taxon>NPAAA clade</taxon>
        <taxon>indigoferoid/millettioid clade</taxon>
        <taxon>Phaseoleae</taxon>
        <taxon>Glycine</taxon>
        <taxon>Glycine subgen. Soja</taxon>
    </lineage>
</organism>
<keyword id="KW-0002">3D-structure</keyword>
<keyword id="KW-0150">Chloroplast</keyword>
<keyword id="KW-0408">Iron</keyword>
<keyword id="KW-0409">Iron storage</keyword>
<keyword id="KW-0479">Metal-binding</keyword>
<keyword id="KW-0560">Oxidoreductase</keyword>
<keyword id="KW-0934">Plastid</keyword>
<keyword id="KW-1185">Reference proteome</keyword>
<keyword id="KW-0809">Transit peptide</keyword>
<comment type="function">
    <text>Stores iron in a soluble, non-toxic, readily available form. Important for iron homeostasis. Has ferroxidase activity. Iron is taken up in the ferrous form and deposited as ferric hydroxides after oxidation.</text>
</comment>
<comment type="catalytic activity">
    <reaction>
        <text>4 Fe(2+) + O2 + 4 H(+) = 4 Fe(3+) + 2 H2O</text>
        <dbReference type="Rhea" id="RHEA:11148"/>
        <dbReference type="ChEBI" id="CHEBI:15377"/>
        <dbReference type="ChEBI" id="CHEBI:15378"/>
        <dbReference type="ChEBI" id="CHEBI:15379"/>
        <dbReference type="ChEBI" id="CHEBI:29033"/>
        <dbReference type="ChEBI" id="CHEBI:29034"/>
        <dbReference type="EC" id="1.16.3.1"/>
    </reaction>
</comment>
<comment type="subunit">
    <text>Oligomer of 24 subunits. There are two types of subunits: L (light) chain and H (heavy) chain. The major chain can be light or heavy, depending on the species and tissue type. The functional molecule forms a roughly spherical shell with a diameter of 12 nm and contains a central cavity into which the insoluble mineral iron core is deposited.</text>
</comment>
<comment type="subcellular location">
    <subcellularLocation>
        <location>Plastid</location>
        <location>Chloroplast</location>
    </subcellularLocation>
</comment>
<comment type="similarity">
    <text evidence="3">Belongs to the ferritin family.</text>
</comment>
<feature type="transit peptide" description="Chloroplast" evidence="1">
    <location>
        <begin position="1"/>
        <end position="51"/>
    </location>
</feature>
<feature type="chain" id="PRO_0000008865" description="Ferritin-2, chloroplastic">
    <location>
        <begin position="52"/>
        <end position="257"/>
    </location>
</feature>
<feature type="domain" description="Ferritin-like diiron" evidence="2">
    <location>
        <begin position="85"/>
        <end position="238"/>
    </location>
</feature>
<feature type="region of interest" description="Extension peptide (EP)">
    <location>
        <begin position="52"/>
        <end position="84"/>
    </location>
</feature>
<feature type="binding site" evidence="2">
    <location>
        <position position="102"/>
    </location>
    <ligand>
        <name>Fe cation</name>
        <dbReference type="ChEBI" id="CHEBI:24875"/>
        <label>1</label>
    </ligand>
</feature>
<feature type="binding site" evidence="2">
    <location>
        <position position="137"/>
    </location>
    <ligand>
        <name>Fe cation</name>
        <dbReference type="ChEBI" id="CHEBI:24875"/>
        <label>1</label>
    </ligand>
</feature>
<feature type="binding site" evidence="2">
    <location>
        <position position="137"/>
    </location>
    <ligand>
        <name>Fe cation</name>
        <dbReference type="ChEBI" id="CHEBI:24875"/>
        <label>2</label>
    </ligand>
</feature>
<feature type="binding site" evidence="2">
    <location>
        <position position="140"/>
    </location>
    <ligand>
        <name>Fe cation</name>
        <dbReference type="ChEBI" id="CHEBI:24875"/>
        <label>1</label>
    </ligand>
</feature>
<feature type="binding site" evidence="2">
    <location>
        <position position="186"/>
    </location>
    <ligand>
        <name>Fe cation</name>
        <dbReference type="ChEBI" id="CHEBI:24875"/>
        <label>2</label>
    </ligand>
</feature>
<feature type="binding site" evidence="2">
    <location>
        <position position="220"/>
    </location>
    <ligand>
        <name>Fe cation</name>
        <dbReference type="ChEBI" id="CHEBI:24875"/>
        <label>2</label>
    </ligand>
</feature>
<feature type="helix" evidence="4">
    <location>
        <begin position="89"/>
        <end position="116"/>
    </location>
</feature>
<feature type="turn" evidence="4">
    <location>
        <begin position="119"/>
        <end position="121"/>
    </location>
</feature>
<feature type="helix" evidence="4">
    <location>
        <begin position="124"/>
        <end position="151"/>
    </location>
</feature>
<feature type="turn" evidence="4">
    <location>
        <begin position="170"/>
        <end position="172"/>
    </location>
</feature>
<feature type="helix" evidence="4">
    <location>
        <begin position="174"/>
        <end position="202"/>
    </location>
</feature>
<feature type="helix" evidence="4">
    <location>
        <begin position="206"/>
        <end position="215"/>
    </location>
</feature>
<feature type="helix" evidence="4">
    <location>
        <begin position="217"/>
        <end position="237"/>
    </location>
</feature>
<feature type="helix" evidence="4">
    <location>
        <begin position="241"/>
        <end position="251"/>
    </location>
</feature>
<reference key="1">
    <citation type="journal article" date="2001" name="J. Biol. Chem.">
        <title>A novel plant ferritin subunit from soybean that is related to a mechanism in iron release.</title>
        <authorList>
            <person name="Masuda T."/>
            <person name="Goto F."/>
            <person name="Yoshihara T."/>
        </authorList>
    </citation>
    <scope>NUCLEOTIDE SEQUENCE [MRNA]</scope>
</reference>
<accession>Q94IC4</accession>
<name>FRI2_SOYBN</name>
<evidence type="ECO:0000255" key="1"/>
<evidence type="ECO:0000255" key="2">
    <source>
        <dbReference type="PROSITE-ProRule" id="PRU00085"/>
    </source>
</evidence>
<evidence type="ECO:0000305" key="3"/>
<evidence type="ECO:0007829" key="4">
    <source>
        <dbReference type="PDB" id="6J4J"/>
    </source>
</evidence>
<protein>
    <recommendedName>
        <fullName>Ferritin-2, chloroplastic</fullName>
        <ecNumber>1.16.3.1</ecNumber>
    </recommendedName>
    <alternativeName>
        <fullName>SFerH-2</fullName>
    </alternativeName>
</protein>
<proteinExistence type="evidence at protein level"/>
<dbReference type="EC" id="1.16.3.1"/>
<dbReference type="EMBL" id="AB062754">
    <property type="protein sequence ID" value="BAB60683.1"/>
    <property type="molecule type" value="mRNA"/>
</dbReference>
<dbReference type="PDB" id="6J4J">
    <property type="method" value="X-ray"/>
    <property type="resolution" value="2.10 A"/>
    <property type="chains" value="A/B/C/D/E/H=49-257"/>
</dbReference>
<dbReference type="PDB" id="6J4M">
    <property type="method" value="X-ray"/>
    <property type="resolution" value="2.60 A"/>
    <property type="chains" value="A/H=49-257"/>
</dbReference>
<dbReference type="PDBsum" id="6J4J"/>
<dbReference type="PDBsum" id="6J4M"/>
<dbReference type="SMR" id="Q94IC4"/>
<dbReference type="STRING" id="3847.Q94IC4"/>
<dbReference type="PaxDb" id="3847-GLYMA01G31300.1"/>
<dbReference type="eggNOG" id="KOG2332">
    <property type="taxonomic scope" value="Eukaryota"/>
</dbReference>
<dbReference type="InParanoid" id="Q94IC4"/>
<dbReference type="Proteomes" id="UP000008827">
    <property type="component" value="Unplaced"/>
</dbReference>
<dbReference type="GO" id="GO:0009507">
    <property type="term" value="C:chloroplast"/>
    <property type="evidence" value="ECO:0007669"/>
    <property type="project" value="UniProtKB-SubCell"/>
</dbReference>
<dbReference type="GO" id="GO:0005737">
    <property type="term" value="C:cytoplasm"/>
    <property type="evidence" value="ECO:0000318"/>
    <property type="project" value="GO_Central"/>
</dbReference>
<dbReference type="GO" id="GO:0008199">
    <property type="term" value="F:ferric iron binding"/>
    <property type="evidence" value="ECO:0000318"/>
    <property type="project" value="GO_Central"/>
</dbReference>
<dbReference type="GO" id="GO:0008198">
    <property type="term" value="F:ferrous iron binding"/>
    <property type="evidence" value="ECO:0000318"/>
    <property type="project" value="GO_Central"/>
</dbReference>
<dbReference type="GO" id="GO:0004322">
    <property type="term" value="F:ferroxidase activity"/>
    <property type="evidence" value="ECO:0007669"/>
    <property type="project" value="UniProtKB-EC"/>
</dbReference>
<dbReference type="GO" id="GO:0006879">
    <property type="term" value="P:intracellular iron ion homeostasis"/>
    <property type="evidence" value="ECO:0007669"/>
    <property type="project" value="UniProtKB-KW"/>
</dbReference>
<dbReference type="GO" id="GO:0006826">
    <property type="term" value="P:iron ion transport"/>
    <property type="evidence" value="ECO:0007669"/>
    <property type="project" value="InterPro"/>
</dbReference>
<dbReference type="CDD" id="cd01056">
    <property type="entry name" value="Euk_Ferritin"/>
    <property type="match status" value="1"/>
</dbReference>
<dbReference type="FunFam" id="1.20.1260.10:FF:000006">
    <property type="entry name" value="Ferritin"/>
    <property type="match status" value="1"/>
</dbReference>
<dbReference type="Gene3D" id="1.20.1260.10">
    <property type="match status" value="1"/>
</dbReference>
<dbReference type="InterPro" id="IPR001519">
    <property type="entry name" value="Ferritin"/>
</dbReference>
<dbReference type="InterPro" id="IPR012347">
    <property type="entry name" value="Ferritin-like"/>
</dbReference>
<dbReference type="InterPro" id="IPR009040">
    <property type="entry name" value="Ferritin-like_diiron"/>
</dbReference>
<dbReference type="InterPro" id="IPR009078">
    <property type="entry name" value="Ferritin-like_SF"/>
</dbReference>
<dbReference type="InterPro" id="IPR008331">
    <property type="entry name" value="Ferritin_DPS_dom"/>
</dbReference>
<dbReference type="PANTHER" id="PTHR11431">
    <property type="entry name" value="FERRITIN"/>
    <property type="match status" value="1"/>
</dbReference>
<dbReference type="PANTHER" id="PTHR11431:SF101">
    <property type="entry name" value="FERRITIN-2, CHLOROPLASTIC"/>
    <property type="match status" value="1"/>
</dbReference>
<dbReference type="Pfam" id="PF00210">
    <property type="entry name" value="Ferritin"/>
    <property type="match status" value="1"/>
</dbReference>
<dbReference type="SUPFAM" id="SSF47240">
    <property type="entry name" value="Ferritin-like"/>
    <property type="match status" value="1"/>
</dbReference>
<dbReference type="PROSITE" id="PS00204">
    <property type="entry name" value="FERRITIN_2"/>
    <property type="match status" value="1"/>
</dbReference>
<dbReference type="PROSITE" id="PS50905">
    <property type="entry name" value="FERRITIN_LIKE"/>
    <property type="match status" value="1"/>
</dbReference>